<reference key="1">
    <citation type="journal article" date="2006" name="BMC Evol. Biol.">
        <title>Phylogenetic analyses of Vitis (Vitaceae) based on complete chloroplast genome sequences: effects of taxon sampling and phylogenetic methods on resolving relationships among rosids.</title>
        <authorList>
            <person name="Jansen R.K."/>
            <person name="Kaittanis C."/>
            <person name="Lee S.-B."/>
            <person name="Saski C."/>
            <person name="Tomkins J."/>
            <person name="Alverson A.J."/>
            <person name="Daniell H."/>
        </authorList>
    </citation>
    <scope>NUCLEOTIDE SEQUENCE [LARGE SCALE GENOMIC DNA]</scope>
    <source>
        <strain>cv. Maxxa</strain>
    </source>
</reference>
<evidence type="ECO:0000255" key="1">
    <source>
        <dbReference type="HAMAP-Rule" id="MF_01330"/>
    </source>
</evidence>
<geneLocation type="chloroplast"/>
<protein>
    <recommendedName>
        <fullName evidence="1">Protein Ycf2</fullName>
    </recommendedName>
</protein>
<proteinExistence type="inferred from homology"/>
<organism>
    <name type="scientific">Vitis vinifera</name>
    <name type="common">Grape</name>
    <dbReference type="NCBI Taxonomy" id="29760"/>
    <lineage>
        <taxon>Eukaryota</taxon>
        <taxon>Viridiplantae</taxon>
        <taxon>Streptophyta</taxon>
        <taxon>Embryophyta</taxon>
        <taxon>Tracheophyta</taxon>
        <taxon>Spermatophyta</taxon>
        <taxon>Magnoliopsida</taxon>
        <taxon>eudicotyledons</taxon>
        <taxon>Gunneridae</taxon>
        <taxon>Pentapetalae</taxon>
        <taxon>rosids</taxon>
        <taxon>Vitales</taxon>
        <taxon>Vitaceae</taxon>
        <taxon>Viteae</taxon>
        <taxon>Vitis</taxon>
    </lineage>
</organism>
<name>YCF2_VITVI</name>
<sequence>MKGHQFKSWIFELREILREIKNSHYFLDSWTQFTSVGSFIHIFFHQERFIKLFDPRIWSILLSRNSQGSTSNRYFTIKGVVLFVVAVLIYRINNRNMVERKNLYLTGLLPIPMNSIGPRNDTLEESFGSSNINRLIVSLLYLPKGKKISESCFLDPKESTWVLPITKKCIMPESNWGSRWWRNWIGKKRDSSCKISNETVAGIEISFKEKDIKYLEFLFVYYMDDPIHKDHDWELFDRLSPRKRRNIINLNSGQLFEILVKHWICYLMSAFREKIPIEVEGFFKQQGAGSTIQSNDIEHVSHLFSRNKWAISLQNCAQFHMWQFRQDLFVSWGKNPHESDFLRNVSRENWIWLDNVWLVNKDRFFSKVRNVSSNIQYDSTRSSFVQVTDSSQLKGSSDQSRDHFDSISNEDSKYHTLINQREIQQLKERSILWDPSFLQTERTEIESDRFPKCLSGYSSMSMSRLFTEREKQMIIHLLPEEIEEFLGNPTRSIRSFFSDRWSELHLGSNPIERSTRDQKLLKKQQDVSFVPSRRSENKEMVNIFKIITYLQNTVSIHPISSDPGCDMVPKDEPDMDSSNKISFLNKNPFFDLFHLFHDRNRGGYTLHHDFESEERFQEMADRFTLSITEPDLVYHKGFAFSIDSYGLDQKQFLNEVFNSRDESNKKSLLVLPPSFYEENESFYRRIRKKWVRISCGNDLEDPKPKIVVFASNNIMEAVNQYILIRNLIQIQYSTYGYIRNVLNRFFLMNRSDRNFEYGIQRDQIGNDTLNHRTIMKYTINQHLSNLKKSQKKWFDPLIFISRTERSMNRDPHAYRYKWSNGSKNFQEHLEHFVSEQKSRFQVVFDRLRINQYSIDWSEVIDKKDLSKSLRFFLSKSLLFLSKLLLFLSNSLPFFFVSFGNIPIHRSEIHIYELKGPNDQLCNQLLESIGLQIIHLKKWKLFLLDDHDTSQKSKFLINGGTISPFLFNKIPKWMIDSFHSRNNRRKSFDNTDSYFSMISHDQDNWLNPVKPFHRSSLISSFYKANRLRFLNNPHRFCFYCNKRFPFYVEKARINNSDFTYGQFLNILFIRKKIFSLCGGKKKHAFLERDTISPIESQVSNIFIPNDFPQSGDETYNLYKSFHFPIRSNPFVRRAIYSIADISGTPLTEGQIVNFERTYCQPLSDMNLSDSEGKNLHQYLNFNSNMGLIHTPCSEKYLPSEKRKKRSLCIKKCVEKGQMYRTFQRDSAFSTLSKWNLFQTYMPWFLTSTGYKYLNLIFLDTFSDLLPILSSSPKFVSIFHDIMYGSDISWRILQKKLCLPQRNLISEISSKCLHNLLLSEEMIHRNNESPLISTHLRSPNVREFLYSILFLLLVAGYLVRTHLLFVSRASSELQTEFEKVKSLMIPSYMIELRKLLDRYPTSELNSFWLKNLFLVALEQLGDSLEEIRGSASGGNMLLGGGPAYGVKSIRSKKKYLNINLIDIIDLISIIPNPINRITFSRNTRCLSHTSKEIYSLIRKRKNVNGDWIDDKIESWVANSDSIDDEEREFLVQFSTLTTEKRIDQILLSLTHSDHLSKNDSGYQMIEQPGAIYLRYLVDIHKKYLMNYEFNTSCLAERRIFLAHYQTITYSQTSCGANSFHFPSHGKPFSLRLALSPSRGILVIGSIGTGRSYLVKYLATNSYVPFITVFLNKFLDNKPKGFLFDDIDIDDSDDIDASDDIDASDDIDASDDIDRDLDTELELLTMMNALTMDMMPEIDRFYITLQFELAKAMSPCIIWIPNIHDLDVNESNYLSLGLLVNYLSRDCERCSTRNILVIASTHIPQKVDPALIAPNKLNTCIKIRRLLIPQQRKHFFTLSYTRGFHLEKKMFHTNGFGSITMGSNARDLVALTNEALSISITQKKSIIDTNAIRSALHRQTWDLRSQVRSVQDHGILFYQIGRAVAQNVLLSNCPIDPISIYMKKKSCNEGDSYLYKWYFELGTSMKKLTILLYLLSCSAGSVAQDLWSLPGPDEKNGITSYGLVENDSDLVHGLLEVEGALVGSSRTEKDCSQFDNDRVTLLLRPEPRNPLDMMQNGSCSIVDQRFLYEKYESEFEEGAGEGALDPQQIEEDLFNHIVWAPRIWRPWGFLFDCIERTNELGFPYWARSFRGKRIIYDEEDELQENDSEFLQSGTMQYQTRDRSSKEQGFFRISQFIWDPADPLFFLFKDQPFVSVFSHREFFADEEMSKGLLTSQTDPPTSIYKRWFIKNTQEKHFELLIHRQRWLRTNSSLSNGSFRSNTPSESYQYLSNLFLSNARLLDQMTKTLLRKRWLFPDEMKIGFM</sequence>
<accession>Q0ZIV6</accession>
<comment type="function">
    <text>Probable ATPase of unknown function. Its presence in a non-photosynthetic plant (Epifagus virginiana) and experiments in tobacco indicate that it has an essential function which is probably not related to photosynthesis.</text>
</comment>
<comment type="subcellular location">
    <subcellularLocation>
        <location evidence="1">Plastid</location>
        <location evidence="1">Chloroplast stroma</location>
    </subcellularLocation>
</comment>
<comment type="similarity">
    <text evidence="1">Belongs to the Ycf2 family.</text>
</comment>
<gene>
    <name evidence="1" type="primary">ycf2-A</name>
</gene>
<gene>
    <name evidence="1" type="primary">ycf2-B</name>
</gene>
<dbReference type="EMBL" id="DQ424856">
    <property type="protein sequence ID" value="ABE47577.1"/>
    <property type="molecule type" value="Genomic_DNA"/>
</dbReference>
<dbReference type="EMBL" id="DQ424856">
    <property type="protein sequence ID" value="ABE47598.1"/>
    <property type="molecule type" value="Genomic_DNA"/>
</dbReference>
<dbReference type="FunCoup" id="Q0ZIV6">
    <property type="interactions" value="22"/>
</dbReference>
<dbReference type="STRING" id="29760.Q0ZIV6"/>
<dbReference type="PaxDb" id="29760-VIT_11s0052g01670.t01"/>
<dbReference type="KEGG" id="vvi:4025017"/>
<dbReference type="KEGG" id="vvi:4025027"/>
<dbReference type="eggNOG" id="ENOG502RZ9E">
    <property type="taxonomic scope" value="Eukaryota"/>
</dbReference>
<dbReference type="InParanoid" id="Q0ZIV6"/>
<dbReference type="OrthoDB" id="1852053at2759"/>
<dbReference type="Proteomes" id="UP000009183">
    <property type="component" value="Chloroplast"/>
</dbReference>
<dbReference type="ExpressionAtlas" id="Q0ZIV6">
    <property type="expression patterns" value="baseline and differential"/>
</dbReference>
<dbReference type="GO" id="GO:0009570">
    <property type="term" value="C:chloroplast stroma"/>
    <property type="evidence" value="ECO:0007669"/>
    <property type="project" value="UniProtKB-SubCell"/>
</dbReference>
<dbReference type="GO" id="GO:0005524">
    <property type="term" value="F:ATP binding"/>
    <property type="evidence" value="ECO:0007669"/>
    <property type="project" value="UniProtKB-KW"/>
</dbReference>
<dbReference type="GO" id="GO:0016887">
    <property type="term" value="F:ATP hydrolysis activity"/>
    <property type="evidence" value="ECO:0007669"/>
    <property type="project" value="InterPro"/>
</dbReference>
<dbReference type="CDD" id="cd19505">
    <property type="entry name" value="RecA-like_Ycf2"/>
    <property type="match status" value="1"/>
</dbReference>
<dbReference type="Gene3D" id="3.40.50.300">
    <property type="entry name" value="P-loop containing nucleotide triphosphate hydrolases"/>
    <property type="match status" value="1"/>
</dbReference>
<dbReference type="HAMAP" id="MF_01330">
    <property type="entry name" value="Ycf2"/>
    <property type="match status" value="1"/>
</dbReference>
<dbReference type="InterPro" id="IPR003593">
    <property type="entry name" value="AAA+_ATPase"/>
</dbReference>
<dbReference type="InterPro" id="IPR003959">
    <property type="entry name" value="ATPase_AAA_core"/>
</dbReference>
<dbReference type="InterPro" id="IPR027417">
    <property type="entry name" value="P-loop_NTPase"/>
</dbReference>
<dbReference type="InterPro" id="IPR008543">
    <property type="entry name" value="Uncharacterised_Ycf2"/>
</dbReference>
<dbReference type="InterPro" id="IPR056777">
    <property type="entry name" value="Ycf2_N"/>
</dbReference>
<dbReference type="PANTHER" id="PTHR33078:SF92">
    <property type="entry name" value="PROTEIN YCF2"/>
    <property type="match status" value="1"/>
</dbReference>
<dbReference type="PANTHER" id="PTHR33078">
    <property type="entry name" value="PROTEIN YCF2-RELATED"/>
    <property type="match status" value="1"/>
</dbReference>
<dbReference type="Pfam" id="PF00004">
    <property type="entry name" value="AAA"/>
    <property type="match status" value="1"/>
</dbReference>
<dbReference type="Pfam" id="PF05695">
    <property type="entry name" value="Ycf2"/>
    <property type="match status" value="1"/>
</dbReference>
<dbReference type="SMART" id="SM00382">
    <property type="entry name" value="AAA"/>
    <property type="match status" value="1"/>
</dbReference>
<dbReference type="SUPFAM" id="SSF52540">
    <property type="entry name" value="P-loop containing nucleoside triphosphate hydrolases"/>
    <property type="match status" value="1"/>
</dbReference>
<feature type="chain" id="PRO_0000276557" description="Protein Ycf2">
    <location>
        <begin position="1"/>
        <end position="2300"/>
    </location>
</feature>
<feature type="binding site" evidence="1">
    <location>
        <begin position="1642"/>
        <end position="1649"/>
    </location>
    <ligand>
        <name>ATP</name>
        <dbReference type="ChEBI" id="CHEBI:30616"/>
    </ligand>
</feature>
<keyword id="KW-0067">ATP-binding</keyword>
<keyword id="KW-0150">Chloroplast</keyword>
<keyword id="KW-0547">Nucleotide-binding</keyword>
<keyword id="KW-0934">Plastid</keyword>
<keyword id="KW-1185">Reference proteome</keyword>